<reference key="1">
    <citation type="submission" date="2001-02" db="EMBL/GenBank/DDBJ databases">
        <title>Isolation of full-length cDNA clones from macaque brain cDNA libraries.</title>
        <authorList>
            <person name="Osada N."/>
            <person name="Hida M."/>
            <person name="Kusuda J."/>
            <person name="Tanuma R."/>
            <person name="Iseki K."/>
            <person name="Hirai M."/>
            <person name="Terao K."/>
            <person name="Suzuki Y."/>
            <person name="Sugano S."/>
            <person name="Hashimoto K."/>
        </authorList>
    </citation>
    <scope>NUCLEOTIDE SEQUENCE [LARGE SCALE MRNA]</scope>
    <source>
        <tissue>Frontal cortex</tissue>
    </source>
</reference>
<proteinExistence type="evidence at transcript level"/>
<sequence>MLHHHCRRNPELQEELQIQAAVAAGDVHTVRKMLEQGYSPNGRDANGWTLLHFSAARGKERCVRVFLEHGADPTVKDLIGGFTALHYAAMHGRARIARLMLESEYRSDIINAKSNDGWTPLHVAAHYGRDSFVRLLLEFKAEVDPLSDKGTTPLQLAIIRERSSCVKILLDHNANIDIQNGFLLRYAVIKSNHSYCRMFLQRGADTDLGRLEDGQTPLHLSALRDDVLCARMLYNYGADTNTRNYEGQTPLAVSISISGSSRPCLDFLQEVTRQPRNLQDLCRIKIRQCIGLQNLKLLDELPIAKVMKDYLKHKFDDI</sequence>
<comment type="function">
    <text evidence="2 3">Probable substrate-recognition component of a SCF-like ECS (Elongin-Cullin-SOCS-box protein) E3 ubiquitin-protein ligase complex which mediates the ubiquitination and subsequent proteasomal degradation of target proteins. Plays a role in spindle dynamics and genome integrity by targeting the mitotic progression protein PSRC1 for proteasomal degradation in a cell cycle-dependent manner (By similarity). Also participates in meiosis by mediating the proper attachment between kinetochores and microtubules (By similarity).</text>
</comment>
<comment type="pathway">
    <text>Protein modification; protein ubiquitination.</text>
</comment>
<comment type="subunit">
    <text evidence="3">Interacts with CUL5. Interacts with RNF7. Interacts with PSRC1.</text>
</comment>
<comment type="domain">
    <text evidence="1">The SOCS box domain mediates the interaction with the Elongin BC complex, an adapter module in different E3 ubiquitin-protein ligase complexes.</text>
</comment>
<comment type="similarity">
    <text evidence="5">Belongs to the ankyrin SOCS box (ASB) family.</text>
</comment>
<protein>
    <recommendedName>
        <fullName>Ankyrin repeat and SOCS box protein 7</fullName>
        <shortName>ASB-7</shortName>
    </recommendedName>
</protein>
<feature type="chain" id="PRO_0000066936" description="Ankyrin repeat and SOCS box protein 7">
    <location>
        <begin position="1"/>
        <end position="318"/>
    </location>
</feature>
<feature type="repeat" description="ANK 1">
    <location>
        <begin position="13"/>
        <end position="42"/>
    </location>
</feature>
<feature type="repeat" description="ANK 2">
    <location>
        <begin position="46"/>
        <end position="75"/>
    </location>
</feature>
<feature type="repeat" description="ANK 3">
    <location>
        <begin position="80"/>
        <end position="109"/>
    </location>
</feature>
<feature type="repeat" description="ANK 4">
    <location>
        <begin position="116"/>
        <end position="145"/>
    </location>
</feature>
<feature type="repeat" description="ANK 5">
    <location>
        <begin position="149"/>
        <end position="178"/>
    </location>
</feature>
<feature type="repeat" description="ANK 6">
    <location>
        <begin position="180"/>
        <end position="208"/>
    </location>
</feature>
<feature type="repeat" description="ANK 7">
    <location>
        <begin position="213"/>
        <end position="242"/>
    </location>
</feature>
<feature type="domain" description="SOCS box" evidence="4">
    <location>
        <begin position="265"/>
        <end position="318"/>
    </location>
</feature>
<name>ASB7_MACFA</name>
<keyword id="KW-0040">ANK repeat</keyword>
<keyword id="KW-1185">Reference proteome</keyword>
<keyword id="KW-0677">Repeat</keyword>
<keyword id="KW-0833">Ubl conjugation pathway</keyword>
<gene>
    <name type="primary">ASB7</name>
    <name type="ORF">QflA-10826</name>
</gene>
<organism>
    <name type="scientific">Macaca fascicularis</name>
    <name type="common">Crab-eating macaque</name>
    <name type="synonym">Cynomolgus monkey</name>
    <dbReference type="NCBI Taxonomy" id="9541"/>
    <lineage>
        <taxon>Eukaryota</taxon>
        <taxon>Metazoa</taxon>
        <taxon>Chordata</taxon>
        <taxon>Craniata</taxon>
        <taxon>Vertebrata</taxon>
        <taxon>Euteleostomi</taxon>
        <taxon>Mammalia</taxon>
        <taxon>Eutheria</taxon>
        <taxon>Euarchontoglires</taxon>
        <taxon>Primates</taxon>
        <taxon>Haplorrhini</taxon>
        <taxon>Catarrhini</taxon>
        <taxon>Cercopithecidae</taxon>
        <taxon>Cercopithecinae</taxon>
        <taxon>Macaca</taxon>
    </lineage>
</organism>
<accession>Q9BGT9</accession>
<dbReference type="EMBL" id="AB056384">
    <property type="protein sequence ID" value="BAB33040.1"/>
    <property type="molecule type" value="mRNA"/>
</dbReference>
<dbReference type="SMR" id="Q9BGT9"/>
<dbReference type="STRING" id="9541.ENSMFAP00000019731"/>
<dbReference type="eggNOG" id="KOG4177">
    <property type="taxonomic scope" value="Eukaryota"/>
</dbReference>
<dbReference type="UniPathway" id="UPA00143"/>
<dbReference type="Proteomes" id="UP000233100">
    <property type="component" value="Unplaced"/>
</dbReference>
<dbReference type="GO" id="GO:0035556">
    <property type="term" value="P:intracellular signal transduction"/>
    <property type="evidence" value="ECO:0007669"/>
    <property type="project" value="InterPro"/>
</dbReference>
<dbReference type="GO" id="GO:0016567">
    <property type="term" value="P:protein ubiquitination"/>
    <property type="evidence" value="ECO:0007669"/>
    <property type="project" value="UniProtKB-UniPathway"/>
</dbReference>
<dbReference type="CDD" id="cd03726">
    <property type="entry name" value="SOCS_ASB7"/>
    <property type="match status" value="1"/>
</dbReference>
<dbReference type="FunFam" id="1.10.750.20:FF:000004">
    <property type="entry name" value="Ankyrin repeat and SOCS box containing 7"/>
    <property type="match status" value="1"/>
</dbReference>
<dbReference type="FunFam" id="1.25.40.20:FF:000147">
    <property type="entry name" value="Ankyrin repeat and SOCS box containing 7"/>
    <property type="match status" value="1"/>
</dbReference>
<dbReference type="Gene3D" id="1.25.40.20">
    <property type="entry name" value="Ankyrin repeat-containing domain"/>
    <property type="match status" value="2"/>
</dbReference>
<dbReference type="Gene3D" id="1.10.750.20">
    <property type="entry name" value="SOCS box"/>
    <property type="match status" value="1"/>
</dbReference>
<dbReference type="InterPro" id="IPR002110">
    <property type="entry name" value="Ankyrin_rpt"/>
</dbReference>
<dbReference type="InterPro" id="IPR036770">
    <property type="entry name" value="Ankyrin_rpt-contain_sf"/>
</dbReference>
<dbReference type="InterPro" id="IPR037326">
    <property type="entry name" value="ASB7_SOCS"/>
</dbReference>
<dbReference type="InterPro" id="IPR001496">
    <property type="entry name" value="SOCS_box"/>
</dbReference>
<dbReference type="InterPro" id="IPR036036">
    <property type="entry name" value="SOCS_box-like_dom_sf"/>
</dbReference>
<dbReference type="PANTHER" id="PTHR24198">
    <property type="entry name" value="ANKYRIN REPEAT AND PROTEIN KINASE DOMAIN-CONTAINING PROTEIN"/>
    <property type="match status" value="1"/>
</dbReference>
<dbReference type="PANTHER" id="PTHR24198:SF165">
    <property type="entry name" value="ANKYRIN REPEAT-CONTAINING PROTEIN-RELATED"/>
    <property type="match status" value="1"/>
</dbReference>
<dbReference type="Pfam" id="PF12796">
    <property type="entry name" value="Ank_2"/>
    <property type="match status" value="3"/>
</dbReference>
<dbReference type="Pfam" id="PF07525">
    <property type="entry name" value="SOCS_box"/>
    <property type="match status" value="1"/>
</dbReference>
<dbReference type="PRINTS" id="PR01415">
    <property type="entry name" value="ANKYRIN"/>
</dbReference>
<dbReference type="SMART" id="SM00248">
    <property type="entry name" value="ANK"/>
    <property type="match status" value="6"/>
</dbReference>
<dbReference type="SMART" id="SM00253">
    <property type="entry name" value="SOCS"/>
    <property type="match status" value="1"/>
</dbReference>
<dbReference type="SMART" id="SM00969">
    <property type="entry name" value="SOCS_box"/>
    <property type="match status" value="1"/>
</dbReference>
<dbReference type="SUPFAM" id="SSF48403">
    <property type="entry name" value="Ankyrin repeat"/>
    <property type="match status" value="1"/>
</dbReference>
<dbReference type="SUPFAM" id="SSF158235">
    <property type="entry name" value="SOCS box-like"/>
    <property type="match status" value="1"/>
</dbReference>
<dbReference type="PROSITE" id="PS50297">
    <property type="entry name" value="ANK_REP_REGION"/>
    <property type="match status" value="1"/>
</dbReference>
<dbReference type="PROSITE" id="PS50088">
    <property type="entry name" value="ANK_REPEAT"/>
    <property type="match status" value="5"/>
</dbReference>
<dbReference type="PROSITE" id="PS50225">
    <property type="entry name" value="SOCS"/>
    <property type="match status" value="1"/>
</dbReference>
<evidence type="ECO:0000250" key="1"/>
<evidence type="ECO:0000250" key="2">
    <source>
        <dbReference type="UniProtKB" id="Q91ZU0"/>
    </source>
</evidence>
<evidence type="ECO:0000250" key="3">
    <source>
        <dbReference type="UniProtKB" id="Q9H672"/>
    </source>
</evidence>
<evidence type="ECO:0000255" key="4">
    <source>
        <dbReference type="PROSITE-ProRule" id="PRU00194"/>
    </source>
</evidence>
<evidence type="ECO:0000305" key="5"/>